<keyword id="KW-0002">3D-structure</keyword>
<keyword id="KW-0240">DNA-directed RNA polymerase</keyword>
<keyword id="KW-0460">Magnesium</keyword>
<keyword id="KW-0479">Metal-binding</keyword>
<keyword id="KW-0548">Nucleotidyltransferase</keyword>
<keyword id="KW-1185">Reference proteome</keyword>
<keyword id="KW-0804">Transcription</keyword>
<keyword id="KW-0808">Transferase</keyword>
<keyword id="KW-0862">Zinc</keyword>
<evidence type="ECO:0000255" key="1">
    <source>
        <dbReference type="HAMAP-Rule" id="MF_01323"/>
    </source>
</evidence>
<evidence type="ECO:0007829" key="2">
    <source>
        <dbReference type="PDB" id="8SYI"/>
    </source>
</evidence>
<evidence type="ECO:0007829" key="3">
    <source>
        <dbReference type="PDB" id="8URW"/>
    </source>
</evidence>
<gene>
    <name evidence="1" type="primary">rpoC1</name>
    <name type="ordered locus">Synpcc7942_1523</name>
</gene>
<proteinExistence type="evidence at protein level"/>
<accession>P42079</accession>
<accession>Q31N16</accession>
<accession>Q7X4A2</accession>
<sequence length="624" mass="70960">MAKQEQRFDYVKIALASPERIRQWGERTLPNGQVVGEVTKPETINYRTLKPEMDGLFCEKIFGPAKDWECHCGKYKRVRHRGIVCERCGVEVTESRVRRHRMGFIKLAAPVAHVWYLKGIPSYIAILLDMPLRDVEQIVYFNSYVVLNPGNHSELQYKQLLNEDQWMEIEDQIYAEESDLEGIEVGIGAEALQQLLQDLNLNEESEKLRQEIAESKGQKRAKLIKRLRVIDNFIGTESRPEWMVLNVIPVIPPDLRPMVQLDGGRFATSDLNDLYRRVINRNNRLARLQEILAPEIIVRNEKRMLQEAVDALIDNGRRGRTVVGANNRPLKSLSDIIEGKQGRFRQNLLGKRVDYSGRSVIVVGPNLKIHQCGLPREMAIELFQPFVIHRLIKNHSINNIKQAKKLIQKNDPLIWDVLEEVIEGHPVMLNRAPTLHRLGIQAFEPILVEGRAIQLHPLVCPAFNADFDGDQMAVHVPLSIEAQAEARMLMLASGNILSPATGQPIVTPSQDMVLGCYYLTAENPGAQKGAGRYFANLEDAIRAFEQGSVDLHAWVWVRFDGEVESEGESDEPESVVAADDGTVTKTYRFRRIRETEDGQRLSQYVKTTPGRILFNNTVQTALIH</sequence>
<organism>
    <name type="scientific">Synechococcus elongatus (strain ATCC 33912 / PCC 7942 / FACHB-805)</name>
    <name type="common">Anacystis nidulans R2</name>
    <dbReference type="NCBI Taxonomy" id="1140"/>
    <lineage>
        <taxon>Bacteria</taxon>
        <taxon>Bacillati</taxon>
        <taxon>Cyanobacteriota</taxon>
        <taxon>Cyanophyceae</taxon>
        <taxon>Synechococcales</taxon>
        <taxon>Synechococcaceae</taxon>
        <taxon>Synechococcus</taxon>
    </lineage>
</organism>
<reference key="1">
    <citation type="submission" date="2005-08" db="EMBL/GenBank/DDBJ databases">
        <title>Complete sequence of chromosome 1 of Synechococcus elongatus PCC 7942.</title>
        <authorList>
            <consortium name="US DOE Joint Genome Institute"/>
            <person name="Copeland A."/>
            <person name="Lucas S."/>
            <person name="Lapidus A."/>
            <person name="Barry K."/>
            <person name="Detter J.C."/>
            <person name="Glavina T."/>
            <person name="Hammon N."/>
            <person name="Israni S."/>
            <person name="Pitluck S."/>
            <person name="Schmutz J."/>
            <person name="Larimer F."/>
            <person name="Land M."/>
            <person name="Kyrpides N."/>
            <person name="Lykidis A."/>
            <person name="Golden S."/>
            <person name="Richardson P."/>
        </authorList>
    </citation>
    <scope>NUCLEOTIDE SEQUENCE [LARGE SCALE GENOMIC DNA]</scope>
    <source>
        <strain>ATCC 33912 / PCC 7942 / FACHB-805</strain>
    </source>
</reference>
<reference key="2">
    <citation type="journal article" date="1992" name="Nature">
        <title>Multiple evolutionary origins of prochlorophytes, the chlorophyll b-containing prokaryotes.</title>
        <authorList>
            <person name="Palenik B."/>
            <person name="Haselkorn R."/>
        </authorList>
    </citation>
    <scope>NUCLEOTIDE SEQUENCE [GENOMIC DNA] OF 37-239</scope>
</reference>
<reference key="3">
    <citation type="submission" date="2002-11" db="EMBL/GenBank/DDBJ databases">
        <title>The phylogenetic analysis of cyanobacteria based on gyrB and rpoC1 genes.</title>
        <authorList>
            <person name="Seo P."/>
            <person name="Yokota A."/>
        </authorList>
    </citation>
    <scope>NUCLEOTIDE SEQUENCE [GENOMIC DNA] OF 50-344</scope>
</reference>
<comment type="function">
    <text evidence="1">DNA-dependent RNA polymerase catalyzes the transcription of DNA into RNA using the four ribonucleoside triphosphates as substrates.</text>
</comment>
<comment type="catalytic activity">
    <reaction evidence="1">
        <text>RNA(n) + a ribonucleoside 5'-triphosphate = RNA(n+1) + diphosphate</text>
        <dbReference type="Rhea" id="RHEA:21248"/>
        <dbReference type="Rhea" id="RHEA-COMP:14527"/>
        <dbReference type="Rhea" id="RHEA-COMP:17342"/>
        <dbReference type="ChEBI" id="CHEBI:33019"/>
        <dbReference type="ChEBI" id="CHEBI:61557"/>
        <dbReference type="ChEBI" id="CHEBI:140395"/>
        <dbReference type="EC" id="2.7.7.6"/>
    </reaction>
</comment>
<comment type="cofactor">
    <cofactor evidence="1">
        <name>Mg(2+)</name>
        <dbReference type="ChEBI" id="CHEBI:18420"/>
    </cofactor>
    <text evidence="1">Binds 1 Mg(2+) ion per subunit.</text>
</comment>
<comment type="cofactor">
    <cofactor evidence="1">
        <name>Zn(2+)</name>
        <dbReference type="ChEBI" id="CHEBI:29105"/>
    </cofactor>
    <text evidence="1">Binds 1 Zn(2+) ion per subunit.</text>
</comment>
<comment type="subunit">
    <text evidence="1">In cyanobacteria the RNAP catalytic core is composed of 2 alpha, 1 beta, 1 beta', 1 gamma and 1 omega subunit. When a sigma factor is associated with the core the holoenzyme is formed, which can initiate transcription.</text>
</comment>
<comment type="similarity">
    <text evidence="1">Belongs to the RNA polymerase beta' chain family. RpoC1 subfamily.</text>
</comment>
<name>RPOC1_SYNE7</name>
<dbReference type="EC" id="2.7.7.6" evidence="1"/>
<dbReference type="EMBL" id="CP000100">
    <property type="protein sequence ID" value="ABB57553.1"/>
    <property type="molecule type" value="Genomic_DNA"/>
</dbReference>
<dbReference type="EMBL" id="Z11155">
    <property type="protein sequence ID" value="CAA77506.1"/>
    <property type="molecule type" value="Genomic_DNA"/>
</dbReference>
<dbReference type="EMBL" id="AB096728">
    <property type="protein sequence ID" value="BAC76791.1"/>
    <property type="molecule type" value="Genomic_DNA"/>
</dbReference>
<dbReference type="PDB" id="8SYI">
    <property type="method" value="EM"/>
    <property type="resolution" value="2.94 A"/>
    <property type="chains" value="D=1-624"/>
</dbReference>
<dbReference type="PDB" id="8URW">
    <property type="method" value="EM"/>
    <property type="resolution" value="2.79 A"/>
    <property type="chains" value="D=1-624"/>
</dbReference>
<dbReference type="PDBsum" id="8SYI"/>
<dbReference type="PDBsum" id="8URW"/>
<dbReference type="EMDB" id="EMD-40874"/>
<dbReference type="EMDB" id="EMD-42502"/>
<dbReference type="SMR" id="P42079"/>
<dbReference type="STRING" id="1140.Synpcc7942_1523"/>
<dbReference type="PaxDb" id="1140-Synpcc7942_1523"/>
<dbReference type="KEGG" id="syf:Synpcc7942_1523"/>
<dbReference type="eggNOG" id="COG0086">
    <property type="taxonomic scope" value="Bacteria"/>
</dbReference>
<dbReference type="HOGENOM" id="CLU_030022_2_0_3"/>
<dbReference type="OrthoDB" id="9815296at2"/>
<dbReference type="BioCyc" id="SYNEL:SYNPCC7942_1523-MONOMER"/>
<dbReference type="Proteomes" id="UP000889800">
    <property type="component" value="Chromosome"/>
</dbReference>
<dbReference type="GO" id="GO:0000428">
    <property type="term" value="C:DNA-directed RNA polymerase complex"/>
    <property type="evidence" value="ECO:0007669"/>
    <property type="project" value="UniProtKB-KW"/>
</dbReference>
<dbReference type="GO" id="GO:0003677">
    <property type="term" value="F:DNA binding"/>
    <property type="evidence" value="ECO:0007669"/>
    <property type="project" value="UniProtKB-UniRule"/>
</dbReference>
<dbReference type="GO" id="GO:0003899">
    <property type="term" value="F:DNA-directed RNA polymerase activity"/>
    <property type="evidence" value="ECO:0007669"/>
    <property type="project" value="UniProtKB-UniRule"/>
</dbReference>
<dbReference type="GO" id="GO:0000287">
    <property type="term" value="F:magnesium ion binding"/>
    <property type="evidence" value="ECO:0007669"/>
    <property type="project" value="UniProtKB-UniRule"/>
</dbReference>
<dbReference type="GO" id="GO:0008270">
    <property type="term" value="F:zinc ion binding"/>
    <property type="evidence" value="ECO:0007669"/>
    <property type="project" value="UniProtKB-UniRule"/>
</dbReference>
<dbReference type="GO" id="GO:0006351">
    <property type="term" value="P:DNA-templated transcription"/>
    <property type="evidence" value="ECO:0007669"/>
    <property type="project" value="UniProtKB-UniRule"/>
</dbReference>
<dbReference type="Gene3D" id="1.10.40.90">
    <property type="match status" value="1"/>
</dbReference>
<dbReference type="Gene3D" id="2.40.40.20">
    <property type="match status" value="1"/>
</dbReference>
<dbReference type="Gene3D" id="4.10.860.120">
    <property type="entry name" value="RNA polymerase II, clamp domain"/>
    <property type="match status" value="1"/>
</dbReference>
<dbReference type="Gene3D" id="1.10.274.100">
    <property type="entry name" value="RNA polymerase Rpb1, domain 3"/>
    <property type="match status" value="1"/>
</dbReference>
<dbReference type="HAMAP" id="MF_01323">
    <property type="entry name" value="RNApol_bact_RpoC1"/>
    <property type="match status" value="1"/>
</dbReference>
<dbReference type="InterPro" id="IPR012755">
    <property type="entry name" value="DNA-dir_RpoC1_gamma"/>
</dbReference>
<dbReference type="InterPro" id="IPR045867">
    <property type="entry name" value="DNA-dir_RpoC_beta_prime"/>
</dbReference>
<dbReference type="InterPro" id="IPR000722">
    <property type="entry name" value="RNA_pol_asu"/>
</dbReference>
<dbReference type="InterPro" id="IPR006592">
    <property type="entry name" value="RNA_pol_N"/>
</dbReference>
<dbReference type="InterPro" id="IPR007080">
    <property type="entry name" value="RNA_pol_Rpb1_1"/>
</dbReference>
<dbReference type="InterPro" id="IPR007066">
    <property type="entry name" value="RNA_pol_Rpb1_3"/>
</dbReference>
<dbReference type="InterPro" id="IPR042102">
    <property type="entry name" value="RNA_pol_Rpb1_3_sf"/>
</dbReference>
<dbReference type="InterPro" id="IPR044893">
    <property type="entry name" value="RNA_pol_Rpb1_clamp_domain"/>
</dbReference>
<dbReference type="InterPro" id="IPR034678">
    <property type="entry name" value="RNApol_RpoC1"/>
</dbReference>
<dbReference type="NCBIfam" id="NF002729">
    <property type="entry name" value="PRK02625.1"/>
    <property type="match status" value="1"/>
</dbReference>
<dbReference type="NCBIfam" id="TIGR02387">
    <property type="entry name" value="rpoC1_cyan"/>
    <property type="match status" value="1"/>
</dbReference>
<dbReference type="PANTHER" id="PTHR19376">
    <property type="entry name" value="DNA-DIRECTED RNA POLYMERASE"/>
    <property type="match status" value="1"/>
</dbReference>
<dbReference type="PANTHER" id="PTHR19376:SF54">
    <property type="entry name" value="DNA-DIRECTED RNA POLYMERASE SUBUNIT BETA"/>
    <property type="match status" value="1"/>
</dbReference>
<dbReference type="Pfam" id="PF04997">
    <property type="entry name" value="RNA_pol_Rpb1_1"/>
    <property type="match status" value="1"/>
</dbReference>
<dbReference type="Pfam" id="PF00623">
    <property type="entry name" value="RNA_pol_Rpb1_2"/>
    <property type="match status" value="2"/>
</dbReference>
<dbReference type="Pfam" id="PF04983">
    <property type="entry name" value="RNA_pol_Rpb1_3"/>
    <property type="match status" value="1"/>
</dbReference>
<dbReference type="SMART" id="SM00663">
    <property type="entry name" value="RPOLA_N"/>
    <property type="match status" value="1"/>
</dbReference>
<dbReference type="SUPFAM" id="SSF64484">
    <property type="entry name" value="beta and beta-prime subunits of DNA dependent RNA-polymerase"/>
    <property type="match status" value="1"/>
</dbReference>
<feature type="chain" id="PRO_0000067852" description="DNA-directed RNA polymerase subunit gamma">
    <location>
        <begin position="1"/>
        <end position="624"/>
    </location>
</feature>
<feature type="binding site" evidence="1">
    <location>
        <position position="70"/>
    </location>
    <ligand>
        <name>Zn(2+)</name>
        <dbReference type="ChEBI" id="CHEBI:29105"/>
    </ligand>
</feature>
<feature type="binding site" evidence="1">
    <location>
        <position position="72"/>
    </location>
    <ligand>
        <name>Zn(2+)</name>
        <dbReference type="ChEBI" id="CHEBI:29105"/>
    </ligand>
</feature>
<feature type="binding site" evidence="1">
    <location>
        <position position="85"/>
    </location>
    <ligand>
        <name>Zn(2+)</name>
        <dbReference type="ChEBI" id="CHEBI:29105"/>
    </ligand>
</feature>
<feature type="binding site" evidence="1">
    <location>
        <position position="88"/>
    </location>
    <ligand>
        <name>Zn(2+)</name>
        <dbReference type="ChEBI" id="CHEBI:29105"/>
    </ligand>
</feature>
<feature type="binding site" evidence="1">
    <location>
        <position position="466"/>
    </location>
    <ligand>
        <name>Mg(2+)</name>
        <dbReference type="ChEBI" id="CHEBI:18420"/>
    </ligand>
</feature>
<feature type="binding site" evidence="1">
    <location>
        <position position="468"/>
    </location>
    <ligand>
        <name>Mg(2+)</name>
        <dbReference type="ChEBI" id="CHEBI:18420"/>
    </ligand>
</feature>
<feature type="binding site" evidence="1">
    <location>
        <position position="470"/>
    </location>
    <ligand>
        <name>Mg(2+)</name>
        <dbReference type="ChEBI" id="CHEBI:18420"/>
    </ligand>
</feature>
<feature type="strand" evidence="3">
    <location>
        <begin position="10"/>
        <end position="15"/>
    </location>
</feature>
<feature type="helix" evidence="3">
    <location>
        <begin position="18"/>
        <end position="24"/>
    </location>
</feature>
<feature type="strand" evidence="2">
    <location>
        <begin position="30"/>
        <end position="32"/>
    </location>
</feature>
<feature type="strand" evidence="3">
    <location>
        <begin position="46"/>
        <end position="48"/>
    </location>
</feature>
<feature type="strand" evidence="3">
    <location>
        <begin position="53"/>
        <end position="55"/>
    </location>
</feature>
<feature type="helix" evidence="3">
    <location>
        <begin position="59"/>
        <end position="62"/>
    </location>
</feature>
<feature type="strand" evidence="2">
    <location>
        <begin position="71"/>
        <end position="73"/>
    </location>
</feature>
<feature type="turn" evidence="2">
    <location>
        <begin position="77"/>
        <end position="79"/>
    </location>
</feature>
<feature type="turn" evidence="3">
    <location>
        <begin position="86"/>
        <end position="88"/>
    </location>
</feature>
<feature type="helix" evidence="3">
    <location>
        <begin position="95"/>
        <end position="99"/>
    </location>
</feature>
<feature type="strand" evidence="3">
    <location>
        <begin position="103"/>
        <end position="112"/>
    </location>
</feature>
<feature type="turn" evidence="3">
    <location>
        <begin position="115"/>
        <end position="117"/>
    </location>
</feature>
<feature type="strand" evidence="3">
    <location>
        <begin position="118"/>
        <end position="121"/>
    </location>
</feature>
<feature type="helix" evidence="3">
    <location>
        <begin position="123"/>
        <end position="128"/>
    </location>
</feature>
<feature type="helix" evidence="3">
    <location>
        <begin position="132"/>
        <end position="138"/>
    </location>
</feature>
<feature type="turn" evidence="3">
    <location>
        <begin position="139"/>
        <end position="141"/>
    </location>
</feature>
<feature type="strand" evidence="3">
    <location>
        <begin position="144"/>
        <end position="148"/>
    </location>
</feature>
<feature type="helix" evidence="3">
    <location>
        <begin position="163"/>
        <end position="173"/>
    </location>
</feature>
<feature type="turn" evidence="3">
    <location>
        <begin position="174"/>
        <end position="176"/>
    </location>
</feature>
<feature type="helix" evidence="3">
    <location>
        <begin position="192"/>
        <end position="197"/>
    </location>
</feature>
<feature type="helix" evidence="3">
    <location>
        <begin position="201"/>
        <end position="213"/>
    </location>
</feature>
<feature type="helix" evidence="3">
    <location>
        <begin position="218"/>
        <end position="235"/>
    </location>
</feature>
<feature type="helix" evidence="3">
    <location>
        <begin position="240"/>
        <end position="243"/>
    </location>
</feature>
<feature type="strand" evidence="3">
    <location>
        <begin position="244"/>
        <end position="250"/>
    </location>
</feature>
<feature type="helix" evidence="3">
    <location>
        <begin position="253"/>
        <end position="255"/>
    </location>
</feature>
<feature type="helix" evidence="3">
    <location>
        <begin position="270"/>
        <end position="290"/>
    </location>
</feature>
<feature type="helix" evidence="3">
    <location>
        <begin position="298"/>
        <end position="313"/>
    </location>
</feature>
<feature type="strand" evidence="3">
    <location>
        <begin position="317"/>
        <end position="319"/>
    </location>
</feature>
<feature type="strand" evidence="3">
    <location>
        <begin position="325"/>
        <end position="327"/>
    </location>
</feature>
<feature type="helix" evidence="3">
    <location>
        <begin position="334"/>
        <end position="336"/>
    </location>
</feature>
<feature type="strand" evidence="3">
    <location>
        <begin position="337"/>
        <end position="339"/>
    </location>
</feature>
<feature type="helix" evidence="3">
    <location>
        <begin position="343"/>
        <end position="347"/>
    </location>
</feature>
<feature type="strand" evidence="3">
    <location>
        <begin position="351"/>
        <end position="363"/>
    </location>
</feature>
<feature type="strand" evidence="3">
    <location>
        <begin position="371"/>
        <end position="375"/>
    </location>
</feature>
<feature type="helix" evidence="3">
    <location>
        <begin position="376"/>
        <end position="382"/>
    </location>
</feature>
<feature type="helix" evidence="3">
    <location>
        <begin position="384"/>
        <end position="393"/>
    </location>
</feature>
<feature type="helix" evidence="3">
    <location>
        <begin position="400"/>
        <end position="409"/>
    </location>
</feature>
<feature type="helix" evidence="3">
    <location>
        <begin position="413"/>
        <end position="421"/>
    </location>
</feature>
<feature type="strand" evidence="3">
    <location>
        <begin position="427"/>
        <end position="430"/>
    </location>
</feature>
<feature type="helix" evidence="3">
    <location>
        <begin position="437"/>
        <end position="439"/>
    </location>
</feature>
<feature type="strand" evidence="3">
    <location>
        <begin position="440"/>
        <end position="455"/>
    </location>
</feature>
<feature type="helix" evidence="3">
    <location>
        <begin position="457"/>
        <end position="459"/>
    </location>
</feature>
<feature type="helix" evidence="3">
    <location>
        <begin position="460"/>
        <end position="463"/>
    </location>
</feature>
<feature type="turn" evidence="3">
    <location>
        <begin position="467"/>
        <end position="469"/>
    </location>
</feature>
<feature type="strand" evidence="3">
    <location>
        <begin position="471"/>
        <end position="475"/>
    </location>
</feature>
<feature type="helix" evidence="3">
    <location>
        <begin position="480"/>
        <end position="489"/>
    </location>
</feature>
<feature type="helix" evidence="2">
    <location>
        <begin position="492"/>
        <end position="494"/>
    </location>
</feature>
<feature type="strand" evidence="3">
    <location>
        <begin position="499"/>
        <end position="502"/>
    </location>
</feature>
<feature type="helix" evidence="3">
    <location>
        <begin position="511"/>
        <end position="519"/>
    </location>
</feature>
<feature type="turn" evidence="2">
    <location>
        <begin position="528"/>
        <end position="531"/>
    </location>
</feature>
<feature type="strand" evidence="3">
    <location>
        <begin position="533"/>
        <end position="535"/>
    </location>
</feature>
<feature type="helix" evidence="3">
    <location>
        <begin position="538"/>
        <end position="545"/>
    </location>
</feature>
<feature type="strand" evidence="3">
    <location>
        <begin position="555"/>
        <end position="558"/>
    </location>
</feature>
<feature type="strand" evidence="3">
    <location>
        <begin position="563"/>
        <end position="567"/>
    </location>
</feature>
<feature type="strand" evidence="3">
    <location>
        <begin position="573"/>
        <end position="578"/>
    </location>
</feature>
<feature type="turn" evidence="3">
    <location>
        <begin position="579"/>
        <end position="581"/>
    </location>
</feature>
<feature type="strand" evidence="3">
    <location>
        <begin position="582"/>
        <end position="586"/>
    </location>
</feature>
<feature type="strand" evidence="3">
    <location>
        <begin position="588"/>
        <end position="594"/>
    </location>
</feature>
<feature type="strand" evidence="3">
    <location>
        <begin position="600"/>
        <end position="607"/>
    </location>
</feature>
<feature type="helix" evidence="3">
    <location>
        <begin position="609"/>
        <end position="621"/>
    </location>
</feature>
<protein>
    <recommendedName>
        <fullName evidence="1">DNA-directed RNA polymerase subunit gamma</fullName>
        <shortName evidence="1">RNAP subunit gamma</shortName>
        <ecNumber evidence="1">2.7.7.6</ecNumber>
    </recommendedName>
    <alternativeName>
        <fullName evidence="1">RNA polymerase subunit gamma</fullName>
    </alternativeName>
    <alternativeName>
        <fullName evidence="1">Transcriptase subunit gamma</fullName>
    </alternativeName>
</protein>